<organism>
    <name type="scientific">Legionella pneumophila (strain Lens)</name>
    <dbReference type="NCBI Taxonomy" id="297245"/>
    <lineage>
        <taxon>Bacteria</taxon>
        <taxon>Pseudomonadati</taxon>
        <taxon>Pseudomonadota</taxon>
        <taxon>Gammaproteobacteria</taxon>
        <taxon>Legionellales</taxon>
        <taxon>Legionellaceae</taxon>
        <taxon>Legionella</taxon>
    </lineage>
</organism>
<proteinExistence type="inferred from homology"/>
<evidence type="ECO:0000255" key="1">
    <source>
        <dbReference type="HAMAP-Rule" id="MF_00013"/>
    </source>
</evidence>
<evidence type="ECO:0000255" key="2">
    <source>
        <dbReference type="PROSITE-ProRule" id="PRU01067"/>
    </source>
</evidence>
<reference key="1">
    <citation type="journal article" date="2004" name="Nat. Genet.">
        <title>Evidence in the Legionella pneumophila genome for exploitation of host cell functions and high genome plasticity.</title>
        <authorList>
            <person name="Cazalet C."/>
            <person name="Rusniok C."/>
            <person name="Brueggemann H."/>
            <person name="Zidane N."/>
            <person name="Magnier A."/>
            <person name="Ma L."/>
            <person name="Tichit M."/>
            <person name="Jarraud S."/>
            <person name="Bouchier C."/>
            <person name="Vandenesch F."/>
            <person name="Kunst F."/>
            <person name="Etienne J."/>
            <person name="Glaser P."/>
            <person name="Buchrieser C."/>
        </authorList>
    </citation>
    <scope>NUCLEOTIDE SEQUENCE [LARGE SCALE GENOMIC DNA]</scope>
    <source>
        <strain>Lens</strain>
    </source>
</reference>
<comment type="function">
    <text evidence="1">Catalyzes the transfer of endogenously produced octanoic acid from octanoyl-acyl-carrier-protein onto the lipoyl domains of lipoate-dependent enzymes. Lipoyl-ACP can also act as a substrate although octanoyl-ACP is likely to be the physiological substrate.</text>
</comment>
<comment type="catalytic activity">
    <reaction evidence="1">
        <text>octanoyl-[ACP] + L-lysyl-[protein] = N(6)-octanoyl-L-lysyl-[protein] + holo-[ACP] + H(+)</text>
        <dbReference type="Rhea" id="RHEA:17665"/>
        <dbReference type="Rhea" id="RHEA-COMP:9636"/>
        <dbReference type="Rhea" id="RHEA-COMP:9685"/>
        <dbReference type="Rhea" id="RHEA-COMP:9752"/>
        <dbReference type="Rhea" id="RHEA-COMP:9928"/>
        <dbReference type="ChEBI" id="CHEBI:15378"/>
        <dbReference type="ChEBI" id="CHEBI:29969"/>
        <dbReference type="ChEBI" id="CHEBI:64479"/>
        <dbReference type="ChEBI" id="CHEBI:78463"/>
        <dbReference type="ChEBI" id="CHEBI:78809"/>
        <dbReference type="EC" id="2.3.1.181"/>
    </reaction>
</comment>
<comment type="pathway">
    <text evidence="1">Protein modification; protein lipoylation via endogenous pathway; protein N(6)-(lipoyl)lysine from octanoyl-[acyl-carrier-protein]: step 1/2.</text>
</comment>
<comment type="subcellular location">
    <subcellularLocation>
        <location evidence="1">Cytoplasm</location>
    </subcellularLocation>
</comment>
<comment type="miscellaneous">
    <text evidence="1">In the reaction, the free carboxyl group of octanoic acid is attached via an amide linkage to the epsilon-amino group of a specific lysine residue of lipoyl domains of lipoate-dependent enzymes.</text>
</comment>
<comment type="similarity">
    <text evidence="1">Belongs to the LipB family.</text>
</comment>
<keyword id="KW-0012">Acyltransferase</keyword>
<keyword id="KW-0963">Cytoplasm</keyword>
<keyword id="KW-0808">Transferase</keyword>
<gene>
    <name evidence="1" type="primary">lipB</name>
    <name type="ordered locus">lpl1514</name>
</gene>
<sequence length="199" mass="22686">MIIHNLGIKDYTEIWEQMKEFTAVRDSNSYDELWLLEHYPVYTQGQAGKPEHVLNPNSIKIVQSDRGGQVTYHGPGQLVAYVLMDIRRRNLGIRTLVAKLEEILISVLEHYRIPANIRSGAPGVYVGEKKIASIGLRVKNGCTYHGIALNVNMDLSPFLGINPCGFAKMEMTQMSHFHPNIQLEEVSQHFVQYFLTQFK</sequence>
<accession>Q5WWD9</accession>
<name>LIPB_LEGPL</name>
<feature type="chain" id="PRO_0000242730" description="Octanoyltransferase">
    <location>
        <begin position="1"/>
        <end position="199"/>
    </location>
</feature>
<feature type="domain" description="BPL/LPL catalytic" evidence="2">
    <location>
        <begin position="27"/>
        <end position="199"/>
    </location>
</feature>
<feature type="active site" description="Acyl-thioester intermediate" evidence="1">
    <location>
        <position position="164"/>
    </location>
</feature>
<feature type="binding site" evidence="1">
    <location>
        <begin position="66"/>
        <end position="73"/>
    </location>
    <ligand>
        <name>substrate</name>
    </ligand>
</feature>
<feature type="binding site" evidence="1">
    <location>
        <begin position="133"/>
        <end position="135"/>
    </location>
    <ligand>
        <name>substrate</name>
    </ligand>
</feature>
<feature type="binding site" evidence="1">
    <location>
        <begin position="146"/>
        <end position="148"/>
    </location>
    <ligand>
        <name>substrate</name>
    </ligand>
</feature>
<feature type="site" description="Lowers pKa of active site Cys" evidence="1">
    <location>
        <position position="130"/>
    </location>
</feature>
<dbReference type="EC" id="2.3.1.181" evidence="1"/>
<dbReference type="EMBL" id="CR628337">
    <property type="protein sequence ID" value="CAH15754.1"/>
    <property type="molecule type" value="Genomic_DNA"/>
</dbReference>
<dbReference type="RefSeq" id="WP_011215559.1">
    <property type="nucleotide sequence ID" value="NC_006369.1"/>
</dbReference>
<dbReference type="SMR" id="Q5WWD9"/>
<dbReference type="KEGG" id="lpf:lpl1514"/>
<dbReference type="LegioList" id="lpl1514"/>
<dbReference type="HOGENOM" id="CLU_035168_3_1_6"/>
<dbReference type="UniPathway" id="UPA00538">
    <property type="reaction ID" value="UER00592"/>
</dbReference>
<dbReference type="Proteomes" id="UP000002517">
    <property type="component" value="Chromosome"/>
</dbReference>
<dbReference type="GO" id="GO:0005737">
    <property type="term" value="C:cytoplasm"/>
    <property type="evidence" value="ECO:0007669"/>
    <property type="project" value="UniProtKB-SubCell"/>
</dbReference>
<dbReference type="GO" id="GO:0033819">
    <property type="term" value="F:lipoyl(octanoyl) transferase activity"/>
    <property type="evidence" value="ECO:0007669"/>
    <property type="project" value="UniProtKB-EC"/>
</dbReference>
<dbReference type="GO" id="GO:0036211">
    <property type="term" value="P:protein modification process"/>
    <property type="evidence" value="ECO:0007669"/>
    <property type="project" value="InterPro"/>
</dbReference>
<dbReference type="CDD" id="cd16444">
    <property type="entry name" value="LipB"/>
    <property type="match status" value="1"/>
</dbReference>
<dbReference type="FunFam" id="3.30.930.10:FF:000020">
    <property type="entry name" value="Octanoyltransferase"/>
    <property type="match status" value="1"/>
</dbReference>
<dbReference type="Gene3D" id="3.30.930.10">
    <property type="entry name" value="Bira Bifunctional Protein, Domain 2"/>
    <property type="match status" value="1"/>
</dbReference>
<dbReference type="HAMAP" id="MF_00013">
    <property type="entry name" value="LipB"/>
    <property type="match status" value="1"/>
</dbReference>
<dbReference type="InterPro" id="IPR045864">
    <property type="entry name" value="aa-tRNA-synth_II/BPL/LPL"/>
</dbReference>
<dbReference type="InterPro" id="IPR004143">
    <property type="entry name" value="BPL_LPL_catalytic"/>
</dbReference>
<dbReference type="InterPro" id="IPR000544">
    <property type="entry name" value="Octanoyltransferase"/>
</dbReference>
<dbReference type="InterPro" id="IPR020605">
    <property type="entry name" value="Octanoyltransferase_CS"/>
</dbReference>
<dbReference type="NCBIfam" id="TIGR00214">
    <property type="entry name" value="lipB"/>
    <property type="match status" value="1"/>
</dbReference>
<dbReference type="NCBIfam" id="NF010922">
    <property type="entry name" value="PRK14342.1"/>
    <property type="match status" value="1"/>
</dbReference>
<dbReference type="PANTHER" id="PTHR10993:SF7">
    <property type="entry name" value="LIPOYLTRANSFERASE 2, MITOCHONDRIAL-RELATED"/>
    <property type="match status" value="1"/>
</dbReference>
<dbReference type="PANTHER" id="PTHR10993">
    <property type="entry name" value="OCTANOYLTRANSFERASE"/>
    <property type="match status" value="1"/>
</dbReference>
<dbReference type="Pfam" id="PF21948">
    <property type="entry name" value="LplA-B_cat"/>
    <property type="match status" value="1"/>
</dbReference>
<dbReference type="PIRSF" id="PIRSF016262">
    <property type="entry name" value="LPLase"/>
    <property type="match status" value="1"/>
</dbReference>
<dbReference type="SUPFAM" id="SSF55681">
    <property type="entry name" value="Class II aaRS and biotin synthetases"/>
    <property type="match status" value="1"/>
</dbReference>
<dbReference type="PROSITE" id="PS51733">
    <property type="entry name" value="BPL_LPL_CATALYTIC"/>
    <property type="match status" value="1"/>
</dbReference>
<dbReference type="PROSITE" id="PS01313">
    <property type="entry name" value="LIPB"/>
    <property type="match status" value="1"/>
</dbReference>
<protein>
    <recommendedName>
        <fullName evidence="1">Octanoyltransferase</fullName>
        <ecNumber evidence="1">2.3.1.181</ecNumber>
    </recommendedName>
    <alternativeName>
        <fullName evidence="1">Lipoate-protein ligase B</fullName>
    </alternativeName>
    <alternativeName>
        <fullName evidence="1">Lipoyl/octanoyl transferase</fullName>
    </alternativeName>
    <alternativeName>
        <fullName evidence="1">Octanoyl-[acyl-carrier-protein]-protein N-octanoyltransferase</fullName>
    </alternativeName>
</protein>